<feature type="chain" id="PRO_0000132751" description="DNA-directed RNA polymerase subunit Rpo3">
    <location>
        <begin position="1"/>
        <end position="264"/>
    </location>
</feature>
<feature type="binding site" evidence="1">
    <location>
        <position position="203"/>
    </location>
    <ligand>
        <name>[3Fe-4S] cluster</name>
        <dbReference type="ChEBI" id="CHEBI:21137"/>
    </ligand>
</feature>
<feature type="binding site" evidence="1">
    <location>
        <position position="206"/>
    </location>
    <ligand>
        <name>[3Fe-4S] cluster</name>
        <dbReference type="ChEBI" id="CHEBI:21137"/>
    </ligand>
</feature>
<feature type="binding site" evidence="1">
    <location>
        <position position="209"/>
    </location>
    <ligand>
        <name>[3Fe-4S] cluster</name>
        <dbReference type="ChEBI" id="CHEBI:21137"/>
    </ligand>
</feature>
<gene>
    <name evidence="1" type="primary">rpo3</name>
    <name evidence="1" type="synonym">rpoD</name>
    <name type="ordered locus">AF_2282</name>
</gene>
<sequence length="264" mass="29568">MMPEIEILEEKDFKIKFILKNASPALANSFRRAMKAEVPAMAVDYVDIYLNSSYFYDEVIAHRLAMLPIKTYLDRFNMQSECSCGGEGCPNCQISFRLNVEGPKVVYSGDFISDDPDVVFAIDNIPVLELFEGQQLMLEAVARLGTGREHAKFQPVSVCVYKIIPEIVVNENCNGCGDCIEACPRNVFEKDGDKVRVKNVMACSMCGECVEVCEMNAISVNETNNFLFTVEGTGALPVREVMKKALEILRSKAEEMNKIIEEIQ</sequence>
<protein>
    <recommendedName>
        <fullName evidence="1">DNA-directed RNA polymerase subunit Rpo3</fullName>
        <ecNumber evidence="1">2.7.7.6</ecNumber>
    </recommendedName>
    <alternativeName>
        <fullName evidence="1">DNA-directed RNA polymerase subunit D</fullName>
    </alternativeName>
</protein>
<comment type="function">
    <text evidence="1">DNA-dependent RNA polymerase (RNAP) catalyzes the transcription of DNA into RNA using the four ribonucleoside triphosphates as substrates.</text>
</comment>
<comment type="catalytic activity">
    <reaction evidence="1">
        <text>RNA(n) + a ribonucleoside 5'-triphosphate = RNA(n+1) + diphosphate</text>
        <dbReference type="Rhea" id="RHEA:21248"/>
        <dbReference type="Rhea" id="RHEA-COMP:14527"/>
        <dbReference type="Rhea" id="RHEA-COMP:17342"/>
        <dbReference type="ChEBI" id="CHEBI:33019"/>
        <dbReference type="ChEBI" id="CHEBI:61557"/>
        <dbReference type="ChEBI" id="CHEBI:140395"/>
        <dbReference type="EC" id="2.7.7.6"/>
    </reaction>
</comment>
<comment type="cofactor">
    <cofactor evidence="1">
        <name>[3Fe-4S] cluster</name>
        <dbReference type="ChEBI" id="CHEBI:21137"/>
    </cofactor>
    <text evidence="1">Binds 1 [3Fe-4S] cluster.</text>
</comment>
<comment type="subunit">
    <text evidence="1">Part of the RNA polymerase complex.</text>
</comment>
<comment type="subcellular location">
    <subcellularLocation>
        <location evidence="1">Cytoplasm</location>
    </subcellularLocation>
</comment>
<comment type="similarity">
    <text evidence="1">Belongs to the archaeal Rpo3/eukaryotic RPB3 RNA polymerase subunit family.</text>
</comment>
<comment type="caution">
    <text evidence="2">X-ray crystallography in other archaea shows this protein binds a 3Fe-4S cluster, although a 4Fe-4S cluster has been suggested to be present in this protein.</text>
</comment>
<dbReference type="EC" id="2.7.7.6" evidence="1"/>
<dbReference type="EMBL" id="AE000782">
    <property type="protein sequence ID" value="AAB88973.1"/>
    <property type="molecule type" value="Genomic_DNA"/>
</dbReference>
<dbReference type="PIR" id="B69535">
    <property type="entry name" value="B69535"/>
</dbReference>
<dbReference type="RefSeq" id="WP_010879771.1">
    <property type="nucleotide sequence ID" value="NC_000917.1"/>
</dbReference>
<dbReference type="SMR" id="O28002"/>
<dbReference type="STRING" id="224325.AF_2282"/>
<dbReference type="PaxDb" id="224325-AF_2282"/>
<dbReference type="EnsemblBacteria" id="AAB88973">
    <property type="protein sequence ID" value="AAB88973"/>
    <property type="gene ID" value="AF_2282"/>
</dbReference>
<dbReference type="KEGG" id="afu:AF_2282"/>
<dbReference type="eggNOG" id="arCOG04241">
    <property type="taxonomic scope" value="Archaea"/>
</dbReference>
<dbReference type="HOGENOM" id="CLU_038421_3_1_2"/>
<dbReference type="OrthoDB" id="84933at2157"/>
<dbReference type="PhylomeDB" id="O28002"/>
<dbReference type="Proteomes" id="UP000002199">
    <property type="component" value="Chromosome"/>
</dbReference>
<dbReference type="GO" id="GO:0005737">
    <property type="term" value="C:cytoplasm"/>
    <property type="evidence" value="ECO:0007669"/>
    <property type="project" value="UniProtKB-SubCell"/>
</dbReference>
<dbReference type="GO" id="GO:0000428">
    <property type="term" value="C:DNA-directed RNA polymerase complex"/>
    <property type="evidence" value="ECO:0007669"/>
    <property type="project" value="UniProtKB-KW"/>
</dbReference>
<dbReference type="GO" id="GO:0051538">
    <property type="term" value="F:3 iron, 4 sulfur cluster binding"/>
    <property type="evidence" value="ECO:0007669"/>
    <property type="project" value="UniProtKB-KW"/>
</dbReference>
<dbReference type="GO" id="GO:0003677">
    <property type="term" value="F:DNA binding"/>
    <property type="evidence" value="ECO:0007669"/>
    <property type="project" value="UniProtKB-UniRule"/>
</dbReference>
<dbReference type="GO" id="GO:0003899">
    <property type="term" value="F:DNA-directed RNA polymerase activity"/>
    <property type="evidence" value="ECO:0007669"/>
    <property type="project" value="UniProtKB-UniRule"/>
</dbReference>
<dbReference type="GO" id="GO:0046872">
    <property type="term" value="F:metal ion binding"/>
    <property type="evidence" value="ECO:0007669"/>
    <property type="project" value="UniProtKB-KW"/>
</dbReference>
<dbReference type="GO" id="GO:0016491">
    <property type="term" value="F:oxidoreductase activity"/>
    <property type="evidence" value="ECO:0007669"/>
    <property type="project" value="UniProtKB-ARBA"/>
</dbReference>
<dbReference type="GO" id="GO:0046983">
    <property type="term" value="F:protein dimerization activity"/>
    <property type="evidence" value="ECO:0007669"/>
    <property type="project" value="InterPro"/>
</dbReference>
<dbReference type="GO" id="GO:0006351">
    <property type="term" value="P:DNA-templated transcription"/>
    <property type="evidence" value="ECO:0007669"/>
    <property type="project" value="UniProtKB-UniRule"/>
</dbReference>
<dbReference type="CDD" id="cd07030">
    <property type="entry name" value="RNAP_D"/>
    <property type="match status" value="1"/>
</dbReference>
<dbReference type="Gene3D" id="3.30.70.3110">
    <property type="match status" value="1"/>
</dbReference>
<dbReference type="Gene3D" id="2.170.120.12">
    <property type="entry name" value="DNA-directed RNA polymerase, insert domain"/>
    <property type="match status" value="1"/>
</dbReference>
<dbReference type="Gene3D" id="3.30.1360.10">
    <property type="entry name" value="RNA polymerase, RBP11-like subunit"/>
    <property type="match status" value="1"/>
</dbReference>
<dbReference type="HAMAP" id="MF_00320">
    <property type="entry name" value="RNApol_arch_Rpo3"/>
    <property type="match status" value="1"/>
</dbReference>
<dbReference type="InterPro" id="IPR017896">
    <property type="entry name" value="4Fe4S_Fe-S-bd"/>
</dbReference>
<dbReference type="InterPro" id="IPR017900">
    <property type="entry name" value="4Fe4S_Fe_S_CS"/>
</dbReference>
<dbReference type="InterPro" id="IPR001514">
    <property type="entry name" value="DNA-dir_RNA_pol_30-40kDasu_CS"/>
</dbReference>
<dbReference type="InterPro" id="IPR011262">
    <property type="entry name" value="DNA-dir_RNA_pol_insert"/>
</dbReference>
<dbReference type="InterPro" id="IPR011263">
    <property type="entry name" value="DNA-dir_RNA_pol_RpoA/D/Rpb3"/>
</dbReference>
<dbReference type="InterPro" id="IPR036603">
    <property type="entry name" value="RBP11-like"/>
</dbReference>
<dbReference type="InterPro" id="IPR022842">
    <property type="entry name" value="RNAP_Rpo3/Rpb3/RPAC1"/>
</dbReference>
<dbReference type="InterPro" id="IPR036643">
    <property type="entry name" value="RNApol_insert_sf"/>
</dbReference>
<dbReference type="InterPro" id="IPR050518">
    <property type="entry name" value="Rpo3/RPB3_RNA_Pol_subunit"/>
</dbReference>
<dbReference type="NCBIfam" id="NF001988">
    <property type="entry name" value="PRK00783.1"/>
    <property type="match status" value="1"/>
</dbReference>
<dbReference type="PANTHER" id="PTHR11800">
    <property type="entry name" value="DNA-DIRECTED RNA POLYMERASE"/>
    <property type="match status" value="1"/>
</dbReference>
<dbReference type="PANTHER" id="PTHR11800:SF2">
    <property type="entry name" value="DNA-DIRECTED RNA POLYMERASE II SUBUNIT RPB3"/>
    <property type="match status" value="1"/>
</dbReference>
<dbReference type="Pfam" id="PF13187">
    <property type="entry name" value="Fer4_9"/>
    <property type="match status" value="1"/>
</dbReference>
<dbReference type="Pfam" id="PF01000">
    <property type="entry name" value="RNA_pol_A_bac"/>
    <property type="match status" value="1"/>
</dbReference>
<dbReference type="Pfam" id="PF01193">
    <property type="entry name" value="RNA_pol_L"/>
    <property type="match status" value="1"/>
</dbReference>
<dbReference type="SMART" id="SM00662">
    <property type="entry name" value="RPOLD"/>
    <property type="match status" value="1"/>
</dbReference>
<dbReference type="SUPFAM" id="SSF56553">
    <property type="entry name" value="Insert subdomain of RNA polymerase alpha subunit"/>
    <property type="match status" value="1"/>
</dbReference>
<dbReference type="SUPFAM" id="SSF55257">
    <property type="entry name" value="RBP11-like subunits of RNA polymerase"/>
    <property type="match status" value="1"/>
</dbReference>
<dbReference type="PROSITE" id="PS00198">
    <property type="entry name" value="4FE4S_FER_1"/>
    <property type="match status" value="2"/>
</dbReference>
<dbReference type="PROSITE" id="PS51379">
    <property type="entry name" value="4FE4S_FER_2"/>
    <property type="match status" value="2"/>
</dbReference>
<dbReference type="PROSITE" id="PS00446">
    <property type="entry name" value="RNA_POL_D_30KD"/>
    <property type="match status" value="1"/>
</dbReference>
<evidence type="ECO:0000255" key="1">
    <source>
        <dbReference type="HAMAP-Rule" id="MF_00320"/>
    </source>
</evidence>
<evidence type="ECO:0000305" key="2"/>
<name>RPO3_ARCFU</name>
<keyword id="KW-0003">3Fe-4S</keyword>
<keyword id="KW-0963">Cytoplasm</keyword>
<keyword id="KW-0240">DNA-directed RNA polymerase</keyword>
<keyword id="KW-0408">Iron</keyword>
<keyword id="KW-0411">Iron-sulfur</keyword>
<keyword id="KW-0479">Metal-binding</keyword>
<keyword id="KW-0548">Nucleotidyltransferase</keyword>
<keyword id="KW-1185">Reference proteome</keyword>
<keyword id="KW-0804">Transcription</keyword>
<keyword id="KW-0808">Transferase</keyword>
<accession>O28002</accession>
<proteinExistence type="inferred from homology"/>
<reference key="1">
    <citation type="journal article" date="1997" name="Nature">
        <title>The complete genome sequence of the hyperthermophilic, sulphate-reducing archaeon Archaeoglobus fulgidus.</title>
        <authorList>
            <person name="Klenk H.-P."/>
            <person name="Clayton R.A."/>
            <person name="Tomb J.-F."/>
            <person name="White O."/>
            <person name="Nelson K.E."/>
            <person name="Ketchum K.A."/>
            <person name="Dodson R.J."/>
            <person name="Gwinn M.L."/>
            <person name="Hickey E.K."/>
            <person name="Peterson J.D."/>
            <person name="Richardson D.L."/>
            <person name="Kerlavage A.R."/>
            <person name="Graham D.E."/>
            <person name="Kyrpides N.C."/>
            <person name="Fleischmann R.D."/>
            <person name="Quackenbush J."/>
            <person name="Lee N.H."/>
            <person name="Sutton G.G."/>
            <person name="Gill S.R."/>
            <person name="Kirkness E.F."/>
            <person name="Dougherty B.A."/>
            <person name="McKenney K."/>
            <person name="Adams M.D."/>
            <person name="Loftus B.J."/>
            <person name="Peterson S.N."/>
            <person name="Reich C.I."/>
            <person name="McNeil L.K."/>
            <person name="Badger J.H."/>
            <person name="Glodek A."/>
            <person name="Zhou L."/>
            <person name="Overbeek R."/>
            <person name="Gocayne J.D."/>
            <person name="Weidman J.F."/>
            <person name="McDonald L.A."/>
            <person name="Utterback T.R."/>
            <person name="Cotton M.D."/>
            <person name="Spriggs T."/>
            <person name="Artiach P."/>
            <person name="Kaine B.P."/>
            <person name="Sykes S.M."/>
            <person name="Sadow P.W."/>
            <person name="D'Andrea K.P."/>
            <person name="Bowman C."/>
            <person name="Fujii C."/>
            <person name="Garland S.A."/>
            <person name="Mason T.M."/>
            <person name="Olsen G.J."/>
            <person name="Fraser C.M."/>
            <person name="Smith H.O."/>
            <person name="Woese C.R."/>
            <person name="Venter J.C."/>
        </authorList>
    </citation>
    <scope>NUCLEOTIDE SEQUENCE [LARGE SCALE GENOMIC DNA]</scope>
    <source>
        <strain>ATCC 49558 / DSM 4304 / JCM 9628 / NBRC 100126 / VC-16</strain>
    </source>
</reference>
<organism>
    <name type="scientific">Archaeoglobus fulgidus (strain ATCC 49558 / DSM 4304 / JCM 9628 / NBRC 100126 / VC-16)</name>
    <dbReference type="NCBI Taxonomy" id="224325"/>
    <lineage>
        <taxon>Archaea</taxon>
        <taxon>Methanobacteriati</taxon>
        <taxon>Methanobacteriota</taxon>
        <taxon>Archaeoglobi</taxon>
        <taxon>Archaeoglobales</taxon>
        <taxon>Archaeoglobaceae</taxon>
        <taxon>Archaeoglobus</taxon>
    </lineage>
</organism>